<feature type="chain" id="PRO_1000077924" description="UvrABC system protein B">
    <location>
        <begin position="1"/>
        <end position="663"/>
    </location>
</feature>
<feature type="domain" description="Helicase ATP-binding" evidence="1">
    <location>
        <begin position="31"/>
        <end position="188"/>
    </location>
</feature>
<feature type="domain" description="Helicase C-terminal" evidence="1">
    <location>
        <begin position="435"/>
        <end position="601"/>
    </location>
</feature>
<feature type="domain" description="UVR" evidence="1">
    <location>
        <begin position="627"/>
        <end position="662"/>
    </location>
</feature>
<feature type="short sequence motif" description="Beta-hairpin">
    <location>
        <begin position="97"/>
        <end position="120"/>
    </location>
</feature>
<feature type="binding site" evidence="1">
    <location>
        <begin position="44"/>
        <end position="51"/>
    </location>
    <ligand>
        <name>ATP</name>
        <dbReference type="ChEBI" id="CHEBI:30616"/>
    </ligand>
</feature>
<organism>
    <name type="scientific">Streptococcus mutans serotype c (strain ATCC 700610 / UA159)</name>
    <dbReference type="NCBI Taxonomy" id="210007"/>
    <lineage>
        <taxon>Bacteria</taxon>
        <taxon>Bacillati</taxon>
        <taxon>Bacillota</taxon>
        <taxon>Bacilli</taxon>
        <taxon>Lactobacillales</taxon>
        <taxon>Streptococcaceae</taxon>
        <taxon>Streptococcus</taxon>
    </lineage>
</organism>
<accession>Q8CWX7</accession>
<evidence type="ECO:0000255" key="1">
    <source>
        <dbReference type="HAMAP-Rule" id="MF_00204"/>
    </source>
</evidence>
<proteinExistence type="inferred from homology"/>
<name>UVRB_STRMU</name>
<protein>
    <recommendedName>
        <fullName evidence="1">UvrABC system protein B</fullName>
        <shortName evidence="1">Protein UvrB</shortName>
    </recommendedName>
    <alternativeName>
        <fullName evidence="1">Excinuclease ABC subunit B</fullName>
    </alternativeName>
</protein>
<gene>
    <name evidence="1" type="primary">uvrB</name>
    <name type="ordered locus">SMU_809</name>
</gene>
<comment type="function">
    <text evidence="1">The UvrABC repair system catalyzes the recognition and processing of DNA lesions. A damage recognition complex composed of 2 UvrA and 2 UvrB subunits scans DNA for abnormalities. Upon binding of the UvrA(2)B(2) complex to a putative damaged site, the DNA wraps around one UvrB monomer. DNA wrap is dependent on ATP binding by UvrB and probably causes local melting of the DNA helix, facilitating insertion of UvrB beta-hairpin between the DNA strands. Then UvrB probes one DNA strand for the presence of a lesion. If a lesion is found the UvrA subunits dissociate and the UvrB-DNA preincision complex is formed. This complex is subsequently bound by UvrC and the second UvrB is released. If no lesion is found, the DNA wraps around the other UvrB subunit that will check the other stand for damage.</text>
</comment>
<comment type="subunit">
    <text evidence="1">Forms a heterotetramer with UvrA during the search for lesions. Interacts with UvrC in an incision complex.</text>
</comment>
<comment type="subcellular location">
    <subcellularLocation>
        <location evidence="1">Cytoplasm</location>
    </subcellularLocation>
</comment>
<comment type="domain">
    <text evidence="1">The beta-hairpin motif is involved in DNA binding.</text>
</comment>
<comment type="similarity">
    <text evidence="1">Belongs to the UvrB family.</text>
</comment>
<dbReference type="EMBL" id="AE014133">
    <property type="protein sequence ID" value="AAN58526.1"/>
    <property type="molecule type" value="Genomic_DNA"/>
</dbReference>
<dbReference type="RefSeq" id="NP_721220.1">
    <property type="nucleotide sequence ID" value="NC_004350.2"/>
</dbReference>
<dbReference type="RefSeq" id="WP_002261961.1">
    <property type="nucleotide sequence ID" value="NC_004350.2"/>
</dbReference>
<dbReference type="SMR" id="Q8CWX7"/>
<dbReference type="STRING" id="210007.SMU_809"/>
<dbReference type="KEGG" id="smu:SMU_809"/>
<dbReference type="PATRIC" id="fig|210007.7.peg.717"/>
<dbReference type="eggNOG" id="COG0556">
    <property type="taxonomic scope" value="Bacteria"/>
</dbReference>
<dbReference type="HOGENOM" id="CLU_009621_2_1_9"/>
<dbReference type="OrthoDB" id="9806651at2"/>
<dbReference type="PhylomeDB" id="Q8CWX7"/>
<dbReference type="Proteomes" id="UP000002512">
    <property type="component" value="Chromosome"/>
</dbReference>
<dbReference type="GO" id="GO:0005737">
    <property type="term" value="C:cytoplasm"/>
    <property type="evidence" value="ECO:0007669"/>
    <property type="project" value="UniProtKB-SubCell"/>
</dbReference>
<dbReference type="GO" id="GO:0009380">
    <property type="term" value="C:excinuclease repair complex"/>
    <property type="evidence" value="ECO:0007669"/>
    <property type="project" value="InterPro"/>
</dbReference>
<dbReference type="GO" id="GO:0005524">
    <property type="term" value="F:ATP binding"/>
    <property type="evidence" value="ECO:0007669"/>
    <property type="project" value="UniProtKB-UniRule"/>
</dbReference>
<dbReference type="GO" id="GO:0016887">
    <property type="term" value="F:ATP hydrolysis activity"/>
    <property type="evidence" value="ECO:0007669"/>
    <property type="project" value="InterPro"/>
</dbReference>
<dbReference type="GO" id="GO:0003677">
    <property type="term" value="F:DNA binding"/>
    <property type="evidence" value="ECO:0007669"/>
    <property type="project" value="UniProtKB-UniRule"/>
</dbReference>
<dbReference type="GO" id="GO:0009381">
    <property type="term" value="F:excinuclease ABC activity"/>
    <property type="evidence" value="ECO:0007669"/>
    <property type="project" value="UniProtKB-UniRule"/>
</dbReference>
<dbReference type="GO" id="GO:0004386">
    <property type="term" value="F:helicase activity"/>
    <property type="evidence" value="ECO:0007669"/>
    <property type="project" value="UniProtKB-KW"/>
</dbReference>
<dbReference type="GO" id="GO:0006289">
    <property type="term" value="P:nucleotide-excision repair"/>
    <property type="evidence" value="ECO:0007669"/>
    <property type="project" value="UniProtKB-UniRule"/>
</dbReference>
<dbReference type="GO" id="GO:0009432">
    <property type="term" value="P:SOS response"/>
    <property type="evidence" value="ECO:0007669"/>
    <property type="project" value="UniProtKB-UniRule"/>
</dbReference>
<dbReference type="CDD" id="cd17916">
    <property type="entry name" value="DEXHc_UvrB"/>
    <property type="match status" value="1"/>
</dbReference>
<dbReference type="CDD" id="cd18790">
    <property type="entry name" value="SF2_C_UvrB"/>
    <property type="match status" value="1"/>
</dbReference>
<dbReference type="Gene3D" id="3.40.50.300">
    <property type="entry name" value="P-loop containing nucleotide triphosphate hydrolases"/>
    <property type="match status" value="3"/>
</dbReference>
<dbReference type="Gene3D" id="4.10.860.10">
    <property type="entry name" value="UVR domain"/>
    <property type="match status" value="1"/>
</dbReference>
<dbReference type="HAMAP" id="MF_00204">
    <property type="entry name" value="UvrB"/>
    <property type="match status" value="1"/>
</dbReference>
<dbReference type="InterPro" id="IPR006935">
    <property type="entry name" value="Helicase/UvrB_N"/>
</dbReference>
<dbReference type="InterPro" id="IPR014001">
    <property type="entry name" value="Helicase_ATP-bd"/>
</dbReference>
<dbReference type="InterPro" id="IPR001650">
    <property type="entry name" value="Helicase_C-like"/>
</dbReference>
<dbReference type="InterPro" id="IPR027417">
    <property type="entry name" value="P-loop_NTPase"/>
</dbReference>
<dbReference type="InterPro" id="IPR001943">
    <property type="entry name" value="UVR_dom"/>
</dbReference>
<dbReference type="InterPro" id="IPR036876">
    <property type="entry name" value="UVR_dom_sf"/>
</dbReference>
<dbReference type="InterPro" id="IPR004807">
    <property type="entry name" value="UvrB"/>
</dbReference>
<dbReference type="InterPro" id="IPR041471">
    <property type="entry name" value="UvrB_inter"/>
</dbReference>
<dbReference type="InterPro" id="IPR024759">
    <property type="entry name" value="UvrB_YAD/RRR_dom"/>
</dbReference>
<dbReference type="NCBIfam" id="NF003673">
    <property type="entry name" value="PRK05298.1"/>
    <property type="match status" value="1"/>
</dbReference>
<dbReference type="NCBIfam" id="TIGR00631">
    <property type="entry name" value="uvrb"/>
    <property type="match status" value="1"/>
</dbReference>
<dbReference type="PANTHER" id="PTHR24029">
    <property type="entry name" value="UVRABC SYSTEM PROTEIN B"/>
    <property type="match status" value="1"/>
</dbReference>
<dbReference type="PANTHER" id="PTHR24029:SF0">
    <property type="entry name" value="UVRABC SYSTEM PROTEIN B"/>
    <property type="match status" value="1"/>
</dbReference>
<dbReference type="Pfam" id="PF00271">
    <property type="entry name" value="Helicase_C"/>
    <property type="match status" value="1"/>
</dbReference>
<dbReference type="Pfam" id="PF04851">
    <property type="entry name" value="ResIII"/>
    <property type="match status" value="1"/>
</dbReference>
<dbReference type="Pfam" id="PF02151">
    <property type="entry name" value="UVR"/>
    <property type="match status" value="1"/>
</dbReference>
<dbReference type="Pfam" id="PF12344">
    <property type="entry name" value="UvrB"/>
    <property type="match status" value="1"/>
</dbReference>
<dbReference type="Pfam" id="PF17757">
    <property type="entry name" value="UvrB_inter"/>
    <property type="match status" value="1"/>
</dbReference>
<dbReference type="SMART" id="SM00487">
    <property type="entry name" value="DEXDc"/>
    <property type="match status" value="1"/>
</dbReference>
<dbReference type="SMART" id="SM00490">
    <property type="entry name" value="HELICc"/>
    <property type="match status" value="1"/>
</dbReference>
<dbReference type="SUPFAM" id="SSF46600">
    <property type="entry name" value="C-terminal UvrC-binding domain of UvrB"/>
    <property type="match status" value="1"/>
</dbReference>
<dbReference type="SUPFAM" id="SSF52540">
    <property type="entry name" value="P-loop containing nucleoside triphosphate hydrolases"/>
    <property type="match status" value="2"/>
</dbReference>
<dbReference type="PROSITE" id="PS51192">
    <property type="entry name" value="HELICASE_ATP_BIND_1"/>
    <property type="match status" value="1"/>
</dbReference>
<dbReference type="PROSITE" id="PS51194">
    <property type="entry name" value="HELICASE_CTER"/>
    <property type="match status" value="1"/>
</dbReference>
<dbReference type="PROSITE" id="PS50151">
    <property type="entry name" value="UVR"/>
    <property type="match status" value="1"/>
</dbReference>
<reference key="1">
    <citation type="journal article" date="2002" name="Proc. Natl. Acad. Sci. U.S.A.">
        <title>Genome sequence of Streptococcus mutans UA159, a cariogenic dental pathogen.</title>
        <authorList>
            <person name="Ajdic D.J."/>
            <person name="McShan W.M."/>
            <person name="McLaughlin R.E."/>
            <person name="Savic G."/>
            <person name="Chang J."/>
            <person name="Carson M.B."/>
            <person name="Primeaux C."/>
            <person name="Tian R."/>
            <person name="Kenton S."/>
            <person name="Jia H.G."/>
            <person name="Lin S.P."/>
            <person name="Qian Y."/>
            <person name="Li S."/>
            <person name="Zhu H."/>
            <person name="Najar F.Z."/>
            <person name="Lai H."/>
            <person name="White J."/>
            <person name="Roe B.A."/>
            <person name="Ferretti J.J."/>
        </authorList>
    </citation>
    <scope>NUCLEOTIDE SEQUENCE [LARGE SCALE GENOMIC DNA]</scope>
    <source>
        <strain>ATCC 700610 / UA159</strain>
    </source>
</reference>
<sequence>MIDRKDNNQFHLVSKYEPSGDQPEAIEALVDNIEGGEKAQILKGATGTGKTYTMSQVIQKVNKPTLVIAHNKTLAGQLYGEFKEFFPDNAVEYFVSYYDYYQPEAYVPSSDTYIEKDSSVNDEIDKLRHSATSALLERNDVIVVASVSCIYGLGSPKEYADSVVSLRPSQEISRDQLLNDLVDIQFERNDIDFQRGRFRVRGDVVEIFPASRDEHAFRVEFFGDEIDRIREIESLTGRVLGEVDHLAIFPATHFMTNDEHMEVAIAKIQKEMKEQVRLFEAEGKLIEAQRIRQRTEYDVEMLREMGYTSGVENYSRHMDGRSEGEPPYTLLDFFPEDFLIMIDESHMTMGQIKGMYNGDRSRKEMLVNYGFRLPSALDNRPLRREEFESHVHQIVYVSATPGDYEMEQTDTVIEQIIRPTGLLDPEVEVRPTMGQMDDLLGEINTRADKGERTFITTLTKKMAEDLTDYLKEMGVKVKYMHSDIKTLERTEIIRDLRLGVFDVLIGINLLREGIDVPEVSLVAILDADKEGFLRNERGLIQTIGRAARNSQGHVIMYADTVTQSMRRAIDETHRRRQIQMAYNEEHGIIPQTIKKDIRDLIAITKANDSEVAEEAVDYNAMTKSERQEAIKKLQKQMQEAAELLDFELAAQIRDMVLELKAMD</sequence>
<keyword id="KW-0067">ATP-binding</keyword>
<keyword id="KW-0963">Cytoplasm</keyword>
<keyword id="KW-0227">DNA damage</keyword>
<keyword id="KW-0228">DNA excision</keyword>
<keyword id="KW-0234">DNA repair</keyword>
<keyword id="KW-0267">Excision nuclease</keyword>
<keyword id="KW-0347">Helicase</keyword>
<keyword id="KW-0378">Hydrolase</keyword>
<keyword id="KW-0547">Nucleotide-binding</keyword>
<keyword id="KW-1185">Reference proteome</keyword>
<keyword id="KW-0742">SOS response</keyword>